<protein>
    <recommendedName>
        <fullName evidence="1">3-octaprenyl-4-hydroxybenzoate carboxy-lyase</fullName>
        <ecNumber evidence="1">4.1.1.98</ecNumber>
    </recommendedName>
    <alternativeName>
        <fullName evidence="1">Polyprenyl p-hydroxybenzoate decarboxylase</fullName>
    </alternativeName>
</protein>
<comment type="function">
    <text evidence="1">Catalyzes the decarboxylation of 3-octaprenyl-4-hydroxy benzoate to 2-octaprenylphenol, an intermediate step in ubiquinone biosynthesis.</text>
</comment>
<comment type="catalytic activity">
    <reaction evidence="1">
        <text>a 4-hydroxy-3-(all-trans-polyprenyl)benzoate + H(+) = a 2-(all-trans-polyprenyl)phenol + CO2</text>
        <dbReference type="Rhea" id="RHEA:41680"/>
        <dbReference type="Rhea" id="RHEA-COMP:9514"/>
        <dbReference type="Rhea" id="RHEA-COMP:9516"/>
        <dbReference type="ChEBI" id="CHEBI:1269"/>
        <dbReference type="ChEBI" id="CHEBI:15378"/>
        <dbReference type="ChEBI" id="CHEBI:16526"/>
        <dbReference type="ChEBI" id="CHEBI:78396"/>
        <dbReference type="EC" id="4.1.1.98"/>
    </reaction>
</comment>
<comment type="cofactor">
    <cofactor evidence="1">
        <name>prenylated FMN</name>
        <dbReference type="ChEBI" id="CHEBI:87746"/>
    </cofactor>
    <text evidence="1">Binds 1 prenylated FMN per subunit.</text>
</comment>
<comment type="cofactor">
    <cofactor evidence="1">
        <name>Mn(2+)</name>
        <dbReference type="ChEBI" id="CHEBI:29035"/>
    </cofactor>
</comment>
<comment type="pathway">
    <text evidence="1">Cofactor biosynthesis; ubiquinone biosynthesis.</text>
</comment>
<comment type="subunit">
    <text evidence="1">Homohexamer.</text>
</comment>
<comment type="subcellular location">
    <subcellularLocation>
        <location evidence="1">Cell membrane</location>
        <topology evidence="1">Peripheral membrane protein</topology>
    </subcellularLocation>
</comment>
<comment type="similarity">
    <text evidence="1">Belongs to the UbiD family.</text>
</comment>
<dbReference type="EC" id="4.1.1.98" evidence="1"/>
<dbReference type="EMBL" id="BX571965">
    <property type="protein sequence ID" value="CAH36639.1"/>
    <property type="molecule type" value="Genomic_DNA"/>
</dbReference>
<dbReference type="RefSeq" id="WP_004536419.1">
    <property type="nucleotide sequence ID" value="NZ_CP009538.1"/>
</dbReference>
<dbReference type="RefSeq" id="YP_109227.1">
    <property type="nucleotide sequence ID" value="NC_006350.1"/>
</dbReference>
<dbReference type="SMR" id="Q63RP1"/>
<dbReference type="STRING" id="272560.BPSL2631"/>
<dbReference type="KEGG" id="bps:BPSL2631"/>
<dbReference type="PATRIC" id="fig|272560.51.peg.2720"/>
<dbReference type="eggNOG" id="COG0043">
    <property type="taxonomic scope" value="Bacteria"/>
</dbReference>
<dbReference type="UniPathway" id="UPA00232"/>
<dbReference type="Proteomes" id="UP000000605">
    <property type="component" value="Chromosome 1"/>
</dbReference>
<dbReference type="GO" id="GO:0005829">
    <property type="term" value="C:cytosol"/>
    <property type="evidence" value="ECO:0007669"/>
    <property type="project" value="TreeGrafter"/>
</dbReference>
<dbReference type="GO" id="GO:0005886">
    <property type="term" value="C:plasma membrane"/>
    <property type="evidence" value="ECO:0007669"/>
    <property type="project" value="UniProtKB-SubCell"/>
</dbReference>
<dbReference type="GO" id="GO:0008694">
    <property type="term" value="F:3-octaprenyl-4-hydroxybenzoate carboxy-lyase activity"/>
    <property type="evidence" value="ECO:0007669"/>
    <property type="project" value="UniProtKB-UniRule"/>
</dbReference>
<dbReference type="GO" id="GO:0046872">
    <property type="term" value="F:metal ion binding"/>
    <property type="evidence" value="ECO:0007669"/>
    <property type="project" value="UniProtKB-KW"/>
</dbReference>
<dbReference type="GO" id="GO:0006744">
    <property type="term" value="P:ubiquinone biosynthetic process"/>
    <property type="evidence" value="ECO:0007669"/>
    <property type="project" value="UniProtKB-UniRule"/>
</dbReference>
<dbReference type="FunFam" id="1.20.5.570:FF:000001">
    <property type="entry name" value="3-octaprenyl-4-hydroxybenzoate carboxy-lyase"/>
    <property type="match status" value="1"/>
</dbReference>
<dbReference type="FunFam" id="3.40.1670.10:FF:000001">
    <property type="entry name" value="3-octaprenyl-4-hydroxybenzoate carboxy-lyase"/>
    <property type="match status" value="1"/>
</dbReference>
<dbReference type="Gene3D" id="1.20.5.570">
    <property type="entry name" value="Single helix bin"/>
    <property type="match status" value="1"/>
</dbReference>
<dbReference type="Gene3D" id="3.40.1670.10">
    <property type="entry name" value="UbiD C-terminal domain-like"/>
    <property type="match status" value="1"/>
</dbReference>
<dbReference type="HAMAP" id="MF_01636">
    <property type="entry name" value="UbiD"/>
    <property type="match status" value="1"/>
</dbReference>
<dbReference type="InterPro" id="IPR002830">
    <property type="entry name" value="UbiD"/>
</dbReference>
<dbReference type="InterPro" id="IPR049381">
    <property type="entry name" value="UbiD-like_C"/>
</dbReference>
<dbReference type="InterPro" id="IPR049383">
    <property type="entry name" value="UbiD-like_N"/>
</dbReference>
<dbReference type="InterPro" id="IPR023677">
    <property type="entry name" value="UbiD_bacteria"/>
</dbReference>
<dbReference type="InterPro" id="IPR048304">
    <property type="entry name" value="UbiD_Rift_dom"/>
</dbReference>
<dbReference type="NCBIfam" id="TIGR00148">
    <property type="entry name" value="UbiD family decarboxylase"/>
    <property type="match status" value="2"/>
</dbReference>
<dbReference type="PANTHER" id="PTHR30108">
    <property type="entry name" value="3-OCTAPRENYL-4-HYDROXYBENZOATE CARBOXY-LYASE-RELATED"/>
    <property type="match status" value="1"/>
</dbReference>
<dbReference type="PANTHER" id="PTHR30108:SF17">
    <property type="entry name" value="FERULIC ACID DECARBOXYLASE 1"/>
    <property type="match status" value="1"/>
</dbReference>
<dbReference type="Pfam" id="PF01977">
    <property type="entry name" value="UbiD"/>
    <property type="match status" value="1"/>
</dbReference>
<dbReference type="Pfam" id="PF20696">
    <property type="entry name" value="UbiD_C"/>
    <property type="match status" value="1"/>
</dbReference>
<dbReference type="Pfam" id="PF20695">
    <property type="entry name" value="UbiD_N"/>
    <property type="match status" value="1"/>
</dbReference>
<dbReference type="SUPFAM" id="SSF50475">
    <property type="entry name" value="FMN-binding split barrel"/>
    <property type="match status" value="1"/>
</dbReference>
<dbReference type="SUPFAM" id="SSF143968">
    <property type="entry name" value="UbiD C-terminal domain-like"/>
    <property type="match status" value="1"/>
</dbReference>
<gene>
    <name evidence="1" type="primary">ubiD</name>
    <name type="ordered locus">BPSL2631</name>
</gene>
<feature type="chain" id="PRO_0000267654" description="3-octaprenyl-4-hydroxybenzoate carboxy-lyase">
    <location>
        <begin position="1"/>
        <end position="519"/>
    </location>
</feature>
<feature type="active site" description="Proton donor" evidence="1">
    <location>
        <position position="318"/>
    </location>
</feature>
<feature type="binding site" evidence="1">
    <location>
        <position position="177"/>
    </location>
    <ligand>
        <name>Mn(2+)</name>
        <dbReference type="ChEBI" id="CHEBI:29035"/>
    </ligand>
</feature>
<feature type="binding site" evidence="1">
    <location>
        <begin position="180"/>
        <end position="182"/>
    </location>
    <ligand>
        <name>prenylated FMN</name>
        <dbReference type="ChEBI" id="CHEBI:87746"/>
    </ligand>
</feature>
<feature type="binding site" evidence="1">
    <location>
        <begin position="194"/>
        <end position="196"/>
    </location>
    <ligand>
        <name>prenylated FMN</name>
        <dbReference type="ChEBI" id="CHEBI:87746"/>
    </ligand>
</feature>
<feature type="binding site" evidence="1">
    <location>
        <begin position="199"/>
        <end position="200"/>
    </location>
    <ligand>
        <name>prenylated FMN</name>
        <dbReference type="ChEBI" id="CHEBI:87746"/>
    </ligand>
</feature>
<feature type="binding site" evidence="1">
    <location>
        <position position="243"/>
    </location>
    <ligand>
        <name>Mn(2+)</name>
        <dbReference type="ChEBI" id="CHEBI:29035"/>
    </ligand>
</feature>
<name>UBID_BURPS</name>
<sequence>MKYKDLRDFIHGLEQRGELRRVTQPVSPVLEMTELCDRVLRAGGPALLFDAPAGHRFPVLGNLFGTPRRVALGMGVDADDEAALASLRDIGRLLSALKEPDPPKRLKDAGKLLSLAKAVWDMSPKTVSAPPCQEIVWEGDDVDLHKLPIQTCWPGDAGPLLTWGLTVTRGPNKTRQNLGIYRQQLIGRNKLIMRWLAHRGGALDFREFALKHPGQPYPVAVVLGADPATMLGAVTPVPDSLSEYQFAGLLRGARTELAKCVTPGVDALQVPARAEIVLEGFIHPQQGAPAPAPEGAPPRPAAGAAAGYEHALEGPYGDHTGYYNEQEWFPVFTVERITMRRDAIYHSTYTGKPPDEPAVLGVALNEVFVPLLQKQFAEITDFYLPPEGCSYRMAIVQMKKSYAGHAKRVMFGVWSFLRQFMYTKFIVVVDEDVNVRDWKEVIWAITTRVDPARDTVLVENTPIDYLDFASPVAGLGSKMGLDATNKWPGETQREWGRPIEMDAAVKARVDRLWTEIGLS</sequence>
<proteinExistence type="inferred from homology"/>
<keyword id="KW-1003">Cell membrane</keyword>
<keyword id="KW-0210">Decarboxylase</keyword>
<keyword id="KW-0285">Flavoprotein</keyword>
<keyword id="KW-0288">FMN</keyword>
<keyword id="KW-0456">Lyase</keyword>
<keyword id="KW-0464">Manganese</keyword>
<keyword id="KW-0472">Membrane</keyword>
<keyword id="KW-0479">Metal-binding</keyword>
<keyword id="KW-1185">Reference proteome</keyword>
<keyword id="KW-0831">Ubiquinone biosynthesis</keyword>
<reference key="1">
    <citation type="journal article" date="2004" name="Proc. Natl. Acad. Sci. U.S.A.">
        <title>Genomic plasticity of the causative agent of melioidosis, Burkholderia pseudomallei.</title>
        <authorList>
            <person name="Holden M.T.G."/>
            <person name="Titball R.W."/>
            <person name="Peacock S.J."/>
            <person name="Cerdeno-Tarraga A.-M."/>
            <person name="Atkins T."/>
            <person name="Crossman L.C."/>
            <person name="Pitt T."/>
            <person name="Churcher C."/>
            <person name="Mungall K.L."/>
            <person name="Bentley S.D."/>
            <person name="Sebaihia M."/>
            <person name="Thomson N.R."/>
            <person name="Bason N."/>
            <person name="Beacham I.R."/>
            <person name="Brooks K."/>
            <person name="Brown K.A."/>
            <person name="Brown N.F."/>
            <person name="Challis G.L."/>
            <person name="Cherevach I."/>
            <person name="Chillingworth T."/>
            <person name="Cronin A."/>
            <person name="Crossett B."/>
            <person name="Davis P."/>
            <person name="DeShazer D."/>
            <person name="Feltwell T."/>
            <person name="Fraser A."/>
            <person name="Hance Z."/>
            <person name="Hauser H."/>
            <person name="Holroyd S."/>
            <person name="Jagels K."/>
            <person name="Keith K.E."/>
            <person name="Maddison M."/>
            <person name="Moule S."/>
            <person name="Price C."/>
            <person name="Quail M.A."/>
            <person name="Rabbinowitsch E."/>
            <person name="Rutherford K."/>
            <person name="Sanders M."/>
            <person name="Simmonds M."/>
            <person name="Songsivilai S."/>
            <person name="Stevens K."/>
            <person name="Tumapa S."/>
            <person name="Vesaratchavest M."/>
            <person name="Whitehead S."/>
            <person name="Yeats C."/>
            <person name="Barrell B.G."/>
            <person name="Oyston P.C.F."/>
            <person name="Parkhill J."/>
        </authorList>
    </citation>
    <scope>NUCLEOTIDE SEQUENCE [LARGE SCALE GENOMIC DNA]</scope>
    <source>
        <strain>K96243</strain>
    </source>
</reference>
<organism>
    <name type="scientific">Burkholderia pseudomallei (strain K96243)</name>
    <dbReference type="NCBI Taxonomy" id="272560"/>
    <lineage>
        <taxon>Bacteria</taxon>
        <taxon>Pseudomonadati</taxon>
        <taxon>Pseudomonadota</taxon>
        <taxon>Betaproteobacteria</taxon>
        <taxon>Burkholderiales</taxon>
        <taxon>Burkholderiaceae</taxon>
        <taxon>Burkholderia</taxon>
        <taxon>pseudomallei group</taxon>
    </lineage>
</organism>
<accession>Q63RP1</accession>
<evidence type="ECO:0000255" key="1">
    <source>
        <dbReference type="HAMAP-Rule" id="MF_01636"/>
    </source>
</evidence>